<proteinExistence type="inferred from homology"/>
<organism>
    <name type="scientific">Treponema pallidum subsp. pallidum (strain SS14)</name>
    <dbReference type="NCBI Taxonomy" id="455434"/>
    <lineage>
        <taxon>Bacteria</taxon>
        <taxon>Pseudomonadati</taxon>
        <taxon>Spirochaetota</taxon>
        <taxon>Spirochaetia</taxon>
        <taxon>Spirochaetales</taxon>
        <taxon>Treponemataceae</taxon>
        <taxon>Treponema</taxon>
    </lineage>
</organism>
<keyword id="KW-0413">Isomerase</keyword>
<keyword id="KW-0819">tRNA processing</keyword>
<feature type="chain" id="PRO_1000097802" description="tRNA pseudouridine synthase A">
    <location>
        <begin position="1"/>
        <end position="280"/>
    </location>
</feature>
<feature type="active site" description="Nucleophile" evidence="1">
    <location>
        <position position="60"/>
    </location>
</feature>
<feature type="binding site" evidence="1">
    <location>
        <position position="119"/>
    </location>
    <ligand>
        <name>substrate</name>
    </ligand>
</feature>
<name>TRUA_TREPS</name>
<sequence length="280" mass="32002">MNDVRKILLRISYDGTRFCGWQKQVSGSRERAPSVQGELEKVAEKIHHQKIAVIGSGRTDSGVHAVGQAAHFCTPMRNILAYRFIPAFNSLLPHSIRITDAREVSSQLHARFSAVMRTYRYHLHCAPVAYAHELPYCWHIARMPDIHLLNQYAATLKGELDCTSFAAAGDKSASKSRYFYDTHFSFNHRVLTFEISANAFLWKMVRSLTGTLLHCEKKRCSVREFVRILHAKDRRLQGPPHRRMGYSYGTSVTPNTYSVQNRNTLARELASTGNARWKTY</sequence>
<evidence type="ECO:0000255" key="1">
    <source>
        <dbReference type="HAMAP-Rule" id="MF_00171"/>
    </source>
</evidence>
<reference key="1">
    <citation type="journal article" date="2008" name="BMC Microbiol.">
        <title>Complete genome sequence of Treponema pallidum ssp. pallidum strain SS14 determined with oligonucleotide arrays.</title>
        <authorList>
            <person name="Matejkova P."/>
            <person name="Strouhal M."/>
            <person name="Smajs D."/>
            <person name="Norris S.J."/>
            <person name="Palzkill T."/>
            <person name="Petrosino J.F."/>
            <person name="Sodergren E."/>
            <person name="Norton J.E."/>
            <person name="Singh J."/>
            <person name="Richmond T.A."/>
            <person name="Molla M.N."/>
            <person name="Albert T.J."/>
            <person name="Weinstock G.M."/>
        </authorList>
    </citation>
    <scope>NUCLEOTIDE SEQUENCE [LARGE SCALE GENOMIC DNA]</scope>
    <source>
        <strain>SS14</strain>
    </source>
</reference>
<gene>
    <name evidence="1" type="primary">truA</name>
    <name type="ordered locus">TPASS_0830</name>
</gene>
<accession>B2S468</accession>
<comment type="function">
    <text evidence="1">Formation of pseudouridine at positions 38, 39 and 40 in the anticodon stem and loop of transfer RNAs.</text>
</comment>
<comment type="catalytic activity">
    <reaction evidence="1">
        <text>uridine(38/39/40) in tRNA = pseudouridine(38/39/40) in tRNA</text>
        <dbReference type="Rhea" id="RHEA:22376"/>
        <dbReference type="Rhea" id="RHEA-COMP:10085"/>
        <dbReference type="Rhea" id="RHEA-COMP:10087"/>
        <dbReference type="ChEBI" id="CHEBI:65314"/>
        <dbReference type="ChEBI" id="CHEBI:65315"/>
        <dbReference type="EC" id="5.4.99.12"/>
    </reaction>
</comment>
<comment type="subunit">
    <text evidence="1">Homodimer.</text>
</comment>
<comment type="similarity">
    <text evidence="1">Belongs to the tRNA pseudouridine synthase TruA family.</text>
</comment>
<protein>
    <recommendedName>
        <fullName evidence="1">tRNA pseudouridine synthase A</fullName>
        <ecNumber evidence="1">5.4.99.12</ecNumber>
    </recommendedName>
    <alternativeName>
        <fullName evidence="1">tRNA pseudouridine(38-40) synthase</fullName>
    </alternativeName>
    <alternativeName>
        <fullName evidence="1">tRNA pseudouridylate synthase I</fullName>
    </alternativeName>
    <alternativeName>
        <fullName evidence="1">tRNA-uridine isomerase I</fullName>
    </alternativeName>
</protein>
<dbReference type="EC" id="5.4.99.12" evidence="1"/>
<dbReference type="EMBL" id="CP000805">
    <property type="protein sequence ID" value="ACD71247.1"/>
    <property type="molecule type" value="Genomic_DNA"/>
</dbReference>
<dbReference type="RefSeq" id="WP_010882274.1">
    <property type="nucleotide sequence ID" value="NC_010741.1"/>
</dbReference>
<dbReference type="SMR" id="B2S468"/>
<dbReference type="KEGG" id="tpp:TPASS_0830"/>
<dbReference type="PATRIC" id="fig|243276.5.peg.880"/>
<dbReference type="Proteomes" id="UP000001202">
    <property type="component" value="Chromosome"/>
</dbReference>
<dbReference type="GO" id="GO:0003723">
    <property type="term" value="F:RNA binding"/>
    <property type="evidence" value="ECO:0007669"/>
    <property type="project" value="InterPro"/>
</dbReference>
<dbReference type="GO" id="GO:0160147">
    <property type="term" value="F:tRNA pseudouridine(38-40) synthase activity"/>
    <property type="evidence" value="ECO:0007669"/>
    <property type="project" value="UniProtKB-EC"/>
</dbReference>
<dbReference type="GO" id="GO:0031119">
    <property type="term" value="P:tRNA pseudouridine synthesis"/>
    <property type="evidence" value="ECO:0007669"/>
    <property type="project" value="UniProtKB-UniRule"/>
</dbReference>
<dbReference type="CDD" id="cd02570">
    <property type="entry name" value="PseudoU_synth_EcTruA"/>
    <property type="match status" value="1"/>
</dbReference>
<dbReference type="FunFam" id="3.30.70.580:FF:000001">
    <property type="entry name" value="tRNA pseudouridine synthase A"/>
    <property type="match status" value="1"/>
</dbReference>
<dbReference type="Gene3D" id="3.30.70.660">
    <property type="entry name" value="Pseudouridine synthase I, catalytic domain, C-terminal subdomain"/>
    <property type="match status" value="1"/>
</dbReference>
<dbReference type="Gene3D" id="3.30.70.580">
    <property type="entry name" value="Pseudouridine synthase I, catalytic domain, N-terminal subdomain"/>
    <property type="match status" value="1"/>
</dbReference>
<dbReference type="HAMAP" id="MF_00171">
    <property type="entry name" value="TruA"/>
    <property type="match status" value="1"/>
</dbReference>
<dbReference type="InterPro" id="IPR020103">
    <property type="entry name" value="PsdUridine_synth_cat_dom_sf"/>
</dbReference>
<dbReference type="InterPro" id="IPR001406">
    <property type="entry name" value="PsdUridine_synth_TruA"/>
</dbReference>
<dbReference type="InterPro" id="IPR020097">
    <property type="entry name" value="PsdUridine_synth_TruA_a/b_dom"/>
</dbReference>
<dbReference type="InterPro" id="IPR020095">
    <property type="entry name" value="PsdUridine_synth_TruA_C"/>
</dbReference>
<dbReference type="InterPro" id="IPR020094">
    <property type="entry name" value="TruA/RsuA/RluB/E/F_N"/>
</dbReference>
<dbReference type="NCBIfam" id="TIGR00071">
    <property type="entry name" value="hisT_truA"/>
    <property type="match status" value="1"/>
</dbReference>
<dbReference type="PANTHER" id="PTHR11142">
    <property type="entry name" value="PSEUDOURIDYLATE SYNTHASE"/>
    <property type="match status" value="1"/>
</dbReference>
<dbReference type="PANTHER" id="PTHR11142:SF0">
    <property type="entry name" value="TRNA PSEUDOURIDINE SYNTHASE-LIKE 1"/>
    <property type="match status" value="1"/>
</dbReference>
<dbReference type="Pfam" id="PF01416">
    <property type="entry name" value="PseudoU_synth_1"/>
    <property type="match status" value="2"/>
</dbReference>
<dbReference type="PIRSF" id="PIRSF001430">
    <property type="entry name" value="tRNA_psdUrid_synth"/>
    <property type="match status" value="1"/>
</dbReference>
<dbReference type="SUPFAM" id="SSF55120">
    <property type="entry name" value="Pseudouridine synthase"/>
    <property type="match status" value="1"/>
</dbReference>